<comment type="catalytic activity">
    <reaction evidence="1">
        <text>tRNA(Phe) + L-phenylalanine + ATP = L-phenylalanyl-tRNA(Phe) + AMP + diphosphate + H(+)</text>
        <dbReference type="Rhea" id="RHEA:19413"/>
        <dbReference type="Rhea" id="RHEA-COMP:9668"/>
        <dbReference type="Rhea" id="RHEA-COMP:9699"/>
        <dbReference type="ChEBI" id="CHEBI:15378"/>
        <dbReference type="ChEBI" id="CHEBI:30616"/>
        <dbReference type="ChEBI" id="CHEBI:33019"/>
        <dbReference type="ChEBI" id="CHEBI:58095"/>
        <dbReference type="ChEBI" id="CHEBI:78442"/>
        <dbReference type="ChEBI" id="CHEBI:78531"/>
        <dbReference type="ChEBI" id="CHEBI:456215"/>
        <dbReference type="EC" id="6.1.1.20"/>
    </reaction>
</comment>
<comment type="cofactor">
    <cofactor evidence="1">
        <name>Mg(2+)</name>
        <dbReference type="ChEBI" id="CHEBI:18420"/>
    </cofactor>
    <text evidence="1">Binds 2 magnesium ions per tetramer.</text>
</comment>
<comment type="subunit">
    <text evidence="1">Tetramer of two alpha and two beta subunits.</text>
</comment>
<comment type="subcellular location">
    <subcellularLocation>
        <location evidence="1">Cytoplasm</location>
    </subcellularLocation>
</comment>
<comment type="similarity">
    <text evidence="1">Belongs to the phenylalanyl-tRNA synthetase beta subunit family. Type 1 subfamily.</text>
</comment>
<feature type="chain" id="PRO_0000232067" description="Phenylalanine--tRNA ligase beta subunit">
    <location>
        <begin position="1"/>
        <end position="803"/>
    </location>
</feature>
<feature type="domain" description="tRNA-binding" evidence="1">
    <location>
        <begin position="39"/>
        <end position="152"/>
    </location>
</feature>
<feature type="domain" description="B5" evidence="1">
    <location>
        <begin position="406"/>
        <end position="480"/>
    </location>
</feature>
<feature type="domain" description="FDX-ACB" evidence="1">
    <location>
        <begin position="709"/>
        <end position="802"/>
    </location>
</feature>
<feature type="binding site" evidence="1">
    <location>
        <position position="458"/>
    </location>
    <ligand>
        <name>Mg(2+)</name>
        <dbReference type="ChEBI" id="CHEBI:18420"/>
        <note>shared with alpha subunit</note>
    </ligand>
</feature>
<feature type="binding site" evidence="1">
    <location>
        <position position="464"/>
    </location>
    <ligand>
        <name>Mg(2+)</name>
        <dbReference type="ChEBI" id="CHEBI:18420"/>
        <note>shared with alpha subunit</note>
    </ligand>
</feature>
<feature type="binding site" evidence="1">
    <location>
        <position position="467"/>
    </location>
    <ligand>
        <name>Mg(2+)</name>
        <dbReference type="ChEBI" id="CHEBI:18420"/>
        <note>shared with alpha subunit</note>
    </ligand>
</feature>
<feature type="binding site" evidence="1">
    <location>
        <position position="468"/>
    </location>
    <ligand>
        <name>Mg(2+)</name>
        <dbReference type="ChEBI" id="CHEBI:18420"/>
        <note>shared with alpha subunit</note>
    </ligand>
</feature>
<organism>
    <name type="scientific">Moorella thermoacetica (strain ATCC 39073 / JCM 9320)</name>
    <dbReference type="NCBI Taxonomy" id="264732"/>
    <lineage>
        <taxon>Bacteria</taxon>
        <taxon>Bacillati</taxon>
        <taxon>Bacillota</taxon>
        <taxon>Clostridia</taxon>
        <taxon>Moorellales</taxon>
        <taxon>Moorellaceae</taxon>
        <taxon>Moorella</taxon>
    </lineage>
</organism>
<keyword id="KW-0030">Aminoacyl-tRNA synthetase</keyword>
<keyword id="KW-0067">ATP-binding</keyword>
<keyword id="KW-0963">Cytoplasm</keyword>
<keyword id="KW-0436">Ligase</keyword>
<keyword id="KW-0460">Magnesium</keyword>
<keyword id="KW-0479">Metal-binding</keyword>
<keyword id="KW-0547">Nucleotide-binding</keyword>
<keyword id="KW-0648">Protein biosynthesis</keyword>
<keyword id="KW-0694">RNA-binding</keyword>
<keyword id="KW-0820">tRNA-binding</keyword>
<protein>
    <recommendedName>
        <fullName evidence="1">Phenylalanine--tRNA ligase beta subunit</fullName>
        <ecNumber evidence="1">6.1.1.20</ecNumber>
    </recommendedName>
    <alternativeName>
        <fullName evidence="1">Phenylalanyl-tRNA synthetase beta subunit</fullName>
        <shortName evidence="1">PheRS</shortName>
    </alternativeName>
</protein>
<name>SYFB_MOOTA</name>
<evidence type="ECO:0000255" key="1">
    <source>
        <dbReference type="HAMAP-Rule" id="MF_00283"/>
    </source>
</evidence>
<gene>
    <name evidence="1" type="primary">pheT</name>
    <name type="ordered locus">Moth_1750</name>
</gene>
<dbReference type="EC" id="6.1.1.20" evidence="1"/>
<dbReference type="EMBL" id="CP000232">
    <property type="protein sequence ID" value="ABC20051.1"/>
    <property type="molecule type" value="Genomic_DNA"/>
</dbReference>
<dbReference type="RefSeq" id="YP_430594.1">
    <property type="nucleotide sequence ID" value="NC_007644.1"/>
</dbReference>
<dbReference type="SMR" id="Q2RHN8"/>
<dbReference type="STRING" id="264732.Moth_1750"/>
<dbReference type="EnsemblBacteria" id="ABC20051">
    <property type="protein sequence ID" value="ABC20051"/>
    <property type="gene ID" value="Moth_1750"/>
</dbReference>
<dbReference type="KEGG" id="mta:Moth_1750"/>
<dbReference type="PATRIC" id="fig|264732.11.peg.1900"/>
<dbReference type="eggNOG" id="COG0072">
    <property type="taxonomic scope" value="Bacteria"/>
</dbReference>
<dbReference type="eggNOG" id="COG0073">
    <property type="taxonomic scope" value="Bacteria"/>
</dbReference>
<dbReference type="HOGENOM" id="CLU_016891_0_0_9"/>
<dbReference type="OrthoDB" id="9805455at2"/>
<dbReference type="GO" id="GO:0009328">
    <property type="term" value="C:phenylalanine-tRNA ligase complex"/>
    <property type="evidence" value="ECO:0007669"/>
    <property type="project" value="TreeGrafter"/>
</dbReference>
<dbReference type="GO" id="GO:0005524">
    <property type="term" value="F:ATP binding"/>
    <property type="evidence" value="ECO:0007669"/>
    <property type="project" value="UniProtKB-UniRule"/>
</dbReference>
<dbReference type="GO" id="GO:0140096">
    <property type="term" value="F:catalytic activity, acting on a protein"/>
    <property type="evidence" value="ECO:0007669"/>
    <property type="project" value="UniProtKB-ARBA"/>
</dbReference>
<dbReference type="GO" id="GO:0000287">
    <property type="term" value="F:magnesium ion binding"/>
    <property type="evidence" value="ECO:0007669"/>
    <property type="project" value="UniProtKB-UniRule"/>
</dbReference>
<dbReference type="GO" id="GO:0004826">
    <property type="term" value="F:phenylalanine-tRNA ligase activity"/>
    <property type="evidence" value="ECO:0007669"/>
    <property type="project" value="UniProtKB-UniRule"/>
</dbReference>
<dbReference type="GO" id="GO:0016740">
    <property type="term" value="F:transferase activity"/>
    <property type="evidence" value="ECO:0007669"/>
    <property type="project" value="UniProtKB-ARBA"/>
</dbReference>
<dbReference type="GO" id="GO:0000049">
    <property type="term" value="F:tRNA binding"/>
    <property type="evidence" value="ECO:0007669"/>
    <property type="project" value="UniProtKB-KW"/>
</dbReference>
<dbReference type="GO" id="GO:0006432">
    <property type="term" value="P:phenylalanyl-tRNA aminoacylation"/>
    <property type="evidence" value="ECO:0007669"/>
    <property type="project" value="UniProtKB-UniRule"/>
</dbReference>
<dbReference type="CDD" id="cd00769">
    <property type="entry name" value="PheRS_beta_core"/>
    <property type="match status" value="1"/>
</dbReference>
<dbReference type="CDD" id="cd02796">
    <property type="entry name" value="tRNA_bind_bactPheRS"/>
    <property type="match status" value="1"/>
</dbReference>
<dbReference type="FunFam" id="2.40.50.140:FF:000045">
    <property type="entry name" value="Phenylalanine--tRNA ligase beta subunit"/>
    <property type="match status" value="1"/>
</dbReference>
<dbReference type="FunFam" id="3.30.56.10:FF:000002">
    <property type="entry name" value="Phenylalanine--tRNA ligase beta subunit"/>
    <property type="match status" value="1"/>
</dbReference>
<dbReference type="FunFam" id="3.30.70.380:FF:000001">
    <property type="entry name" value="Phenylalanine--tRNA ligase beta subunit"/>
    <property type="match status" value="1"/>
</dbReference>
<dbReference type="FunFam" id="3.50.40.10:FF:000001">
    <property type="entry name" value="Phenylalanine--tRNA ligase beta subunit"/>
    <property type="match status" value="1"/>
</dbReference>
<dbReference type="Gene3D" id="3.30.56.10">
    <property type="match status" value="2"/>
</dbReference>
<dbReference type="Gene3D" id="3.30.930.10">
    <property type="entry name" value="Bira Bifunctional Protein, Domain 2"/>
    <property type="match status" value="1"/>
</dbReference>
<dbReference type="Gene3D" id="3.30.70.380">
    <property type="entry name" value="Ferrodoxin-fold anticodon-binding domain"/>
    <property type="match status" value="1"/>
</dbReference>
<dbReference type="Gene3D" id="2.40.50.140">
    <property type="entry name" value="Nucleic acid-binding proteins"/>
    <property type="match status" value="1"/>
</dbReference>
<dbReference type="Gene3D" id="3.50.40.10">
    <property type="entry name" value="Phenylalanyl-trna Synthetase, Chain B, domain 3"/>
    <property type="match status" value="1"/>
</dbReference>
<dbReference type="HAMAP" id="MF_00283">
    <property type="entry name" value="Phe_tRNA_synth_beta1"/>
    <property type="match status" value="1"/>
</dbReference>
<dbReference type="InterPro" id="IPR045864">
    <property type="entry name" value="aa-tRNA-synth_II/BPL/LPL"/>
</dbReference>
<dbReference type="InterPro" id="IPR005146">
    <property type="entry name" value="B3/B4_tRNA-bd"/>
</dbReference>
<dbReference type="InterPro" id="IPR009061">
    <property type="entry name" value="DNA-bd_dom_put_sf"/>
</dbReference>
<dbReference type="InterPro" id="IPR005121">
    <property type="entry name" value="Fdx_antiC-bd"/>
</dbReference>
<dbReference type="InterPro" id="IPR036690">
    <property type="entry name" value="Fdx_antiC-bd_sf"/>
</dbReference>
<dbReference type="InterPro" id="IPR012340">
    <property type="entry name" value="NA-bd_OB-fold"/>
</dbReference>
<dbReference type="InterPro" id="IPR045060">
    <property type="entry name" value="Phe-tRNA-ligase_IIc_bsu"/>
</dbReference>
<dbReference type="InterPro" id="IPR004532">
    <property type="entry name" value="Phe-tRNA-ligase_IIc_bsu_bact"/>
</dbReference>
<dbReference type="InterPro" id="IPR020825">
    <property type="entry name" value="Phe-tRNA_synthase-like_B3/B4"/>
</dbReference>
<dbReference type="InterPro" id="IPR041616">
    <property type="entry name" value="PheRS_beta_core"/>
</dbReference>
<dbReference type="InterPro" id="IPR002547">
    <property type="entry name" value="tRNA-bd_dom"/>
</dbReference>
<dbReference type="InterPro" id="IPR033714">
    <property type="entry name" value="tRNA_bind_bactPheRS"/>
</dbReference>
<dbReference type="InterPro" id="IPR005147">
    <property type="entry name" value="tRNA_synthase_B5-dom"/>
</dbReference>
<dbReference type="NCBIfam" id="TIGR00472">
    <property type="entry name" value="pheT_bact"/>
    <property type="match status" value="1"/>
</dbReference>
<dbReference type="NCBIfam" id="NF045760">
    <property type="entry name" value="YtpR"/>
    <property type="match status" value="1"/>
</dbReference>
<dbReference type="PANTHER" id="PTHR10947:SF0">
    <property type="entry name" value="PHENYLALANINE--TRNA LIGASE BETA SUBUNIT"/>
    <property type="match status" value="1"/>
</dbReference>
<dbReference type="PANTHER" id="PTHR10947">
    <property type="entry name" value="PHENYLALANYL-TRNA SYNTHETASE BETA CHAIN AND LEUCINE-RICH REPEAT-CONTAINING PROTEIN 47"/>
    <property type="match status" value="1"/>
</dbReference>
<dbReference type="Pfam" id="PF03483">
    <property type="entry name" value="B3_4"/>
    <property type="match status" value="1"/>
</dbReference>
<dbReference type="Pfam" id="PF03484">
    <property type="entry name" value="B5"/>
    <property type="match status" value="1"/>
</dbReference>
<dbReference type="Pfam" id="PF03147">
    <property type="entry name" value="FDX-ACB"/>
    <property type="match status" value="1"/>
</dbReference>
<dbReference type="Pfam" id="PF01588">
    <property type="entry name" value="tRNA_bind"/>
    <property type="match status" value="1"/>
</dbReference>
<dbReference type="Pfam" id="PF17759">
    <property type="entry name" value="tRNA_synthFbeta"/>
    <property type="match status" value="1"/>
</dbReference>
<dbReference type="SMART" id="SM00873">
    <property type="entry name" value="B3_4"/>
    <property type="match status" value="1"/>
</dbReference>
<dbReference type="SMART" id="SM00874">
    <property type="entry name" value="B5"/>
    <property type="match status" value="1"/>
</dbReference>
<dbReference type="SMART" id="SM00896">
    <property type="entry name" value="FDX-ACB"/>
    <property type="match status" value="1"/>
</dbReference>
<dbReference type="SUPFAM" id="SSF54991">
    <property type="entry name" value="Anticodon-binding domain of PheRS"/>
    <property type="match status" value="1"/>
</dbReference>
<dbReference type="SUPFAM" id="SSF55681">
    <property type="entry name" value="Class II aaRS and biotin synthetases"/>
    <property type="match status" value="1"/>
</dbReference>
<dbReference type="SUPFAM" id="SSF50249">
    <property type="entry name" value="Nucleic acid-binding proteins"/>
    <property type="match status" value="1"/>
</dbReference>
<dbReference type="SUPFAM" id="SSF56037">
    <property type="entry name" value="PheT/TilS domain"/>
    <property type="match status" value="1"/>
</dbReference>
<dbReference type="SUPFAM" id="SSF46955">
    <property type="entry name" value="Putative DNA-binding domain"/>
    <property type="match status" value="1"/>
</dbReference>
<dbReference type="PROSITE" id="PS51483">
    <property type="entry name" value="B5"/>
    <property type="match status" value="1"/>
</dbReference>
<dbReference type="PROSITE" id="PS51447">
    <property type="entry name" value="FDX_ACB"/>
    <property type="match status" value="1"/>
</dbReference>
<dbReference type="PROSITE" id="PS50886">
    <property type="entry name" value="TRBD"/>
    <property type="match status" value="1"/>
</dbReference>
<proteinExistence type="inferred from homology"/>
<accession>Q2RHN8</accession>
<reference key="1">
    <citation type="journal article" date="2008" name="Environ. Microbiol.">
        <title>The complete genome sequence of Moorella thermoacetica (f. Clostridium thermoaceticum).</title>
        <authorList>
            <person name="Pierce E."/>
            <person name="Xie G."/>
            <person name="Barabote R.D."/>
            <person name="Saunders E."/>
            <person name="Han C.S."/>
            <person name="Detter J.C."/>
            <person name="Richardson P."/>
            <person name="Brettin T.S."/>
            <person name="Das A."/>
            <person name="Ljungdahl L.G."/>
            <person name="Ragsdale S.W."/>
        </authorList>
    </citation>
    <scope>NUCLEOTIDE SEQUENCE [LARGE SCALE GENOMIC DNA]</scope>
    <source>
        <strain>ATCC 39073 / JCM 9320</strain>
    </source>
</reference>
<sequence>MRVPYKWLQQYVDVTLPPAELADKLTMAGLAVEGVEDLTPGFQKVVAGKIKTITPHPDADHLVICNVDAGRELQLVTGAPNVHEGQMVAVALEGARLPGGREIHRATFRGVVSEGMLCSAQELGLDVSLVSPEDREGIITLPPDASPGADAAEVLGLKDVVLVLELTPNRADCLSILGVAREVAAITGAPIHLPATLPGEDGPEITGLATVEITAPDLCARYVARLVQGVRIGPSPAWLQAFLRAAGMRPINNVVDITNFIMLEMGQPLHAFDYDLLEGHRIIVRRAGPGEKITTLDGVERELDPEMLVIADAARPVAVAGVMGGLATEVTPATTNILIESAHFDGASIRRTSRRLGLRSEASTRFERGVNLEGAPAAADRAARLMAELAGGRVAPGRIDCYVKRRQPVTIELRPERVNYLLGTELAPTTMKELLERLHLEVRGEGPFQVTVPAYRGDLTGEIDLVEEIARLYGYNRIPVTLPGNLTAREKQAPAQRWEEAGREAAAAAGLAEVITYSFIGPRALDQLRLPEDHPWRRTVKIQNPLREEQSIMRPSLLPGLLEVAGRNASRRVLPVAIYELGRVFIPAGSRRPGEPLRLAGLVMGTTPRGWNWPAGEMDFYYLKGILESIFSRLRVRDVSWEASNAYPFLHPGRAATIKAGTRVLGYLGELHPDVLAAVELPARACAFELDWEAAGDLALRVPRYEPLPRFPAVERDLAVVVPATTPAAAVAGVIREAGGELLRAIALFDVYEGAPVPEGCKSLAYSLVYQLPDRTLTDAEVNAAQERIQRALEERLGASLRQ</sequence>